<evidence type="ECO:0000255" key="1">
    <source>
        <dbReference type="HAMAP-Rule" id="MF_00454"/>
    </source>
</evidence>
<protein>
    <recommendedName>
        <fullName evidence="1">Fluoride-specific ion channel FluC</fullName>
    </recommendedName>
</protein>
<comment type="function">
    <text evidence="1">Fluoride-specific ion channel. Important for reducing fluoride concentration in the cell, thus reducing its toxicity.</text>
</comment>
<comment type="catalytic activity">
    <reaction evidence="1">
        <text>fluoride(in) = fluoride(out)</text>
        <dbReference type="Rhea" id="RHEA:76159"/>
        <dbReference type="ChEBI" id="CHEBI:17051"/>
    </reaction>
    <physiologicalReaction direction="left-to-right" evidence="1">
        <dbReference type="Rhea" id="RHEA:76160"/>
    </physiologicalReaction>
</comment>
<comment type="activity regulation">
    <text evidence="1">Na(+) is not transported, but it plays an essential structural role and its presence is essential for fluoride channel function.</text>
</comment>
<comment type="subcellular location">
    <subcellularLocation>
        <location evidence="1">Cell inner membrane</location>
        <topology evidence="1">Multi-pass membrane protein</topology>
    </subcellularLocation>
</comment>
<comment type="similarity">
    <text evidence="1">Belongs to the fluoride channel Fluc/FEX (TC 1.A.43) family.</text>
</comment>
<keyword id="KW-0997">Cell inner membrane</keyword>
<keyword id="KW-1003">Cell membrane</keyword>
<keyword id="KW-0407">Ion channel</keyword>
<keyword id="KW-0406">Ion transport</keyword>
<keyword id="KW-0472">Membrane</keyword>
<keyword id="KW-0479">Metal-binding</keyword>
<keyword id="KW-0915">Sodium</keyword>
<keyword id="KW-0812">Transmembrane</keyword>
<keyword id="KW-1133">Transmembrane helix</keyword>
<keyword id="KW-0813">Transport</keyword>
<reference key="1">
    <citation type="journal article" date="2011" name="J. Bacteriol.">
        <title>Complete genome sequence of the metabolically versatile plant growth-promoting endophyte, Variovorax paradoxus S110.</title>
        <authorList>
            <person name="Han J.I."/>
            <person name="Choi H.K."/>
            <person name="Lee S.W."/>
            <person name="Orwin P.M."/>
            <person name="Kim J."/>
            <person name="Laroe S.L."/>
            <person name="Kim T.G."/>
            <person name="O'Neil J."/>
            <person name="Leadbetter J.R."/>
            <person name="Lee S.Y."/>
            <person name="Hur C.G."/>
            <person name="Spain J.C."/>
            <person name="Ovchinnikova G."/>
            <person name="Goodwin L."/>
            <person name="Han C."/>
        </authorList>
    </citation>
    <scope>NUCLEOTIDE SEQUENCE [LARGE SCALE GENOMIC DNA]</scope>
    <source>
        <strain>S110</strain>
    </source>
</reference>
<feature type="chain" id="PRO_1000206264" description="Fluoride-specific ion channel FluC">
    <location>
        <begin position="1"/>
        <end position="125"/>
    </location>
</feature>
<feature type="transmembrane region" description="Helical" evidence="1">
    <location>
        <begin position="5"/>
        <end position="25"/>
    </location>
</feature>
<feature type="transmembrane region" description="Helical" evidence="1">
    <location>
        <begin position="37"/>
        <end position="57"/>
    </location>
</feature>
<feature type="transmembrane region" description="Helical" evidence="1">
    <location>
        <begin position="71"/>
        <end position="91"/>
    </location>
</feature>
<feature type="transmembrane region" description="Helical" evidence="1">
    <location>
        <begin position="97"/>
        <end position="117"/>
    </location>
</feature>
<feature type="binding site" evidence="1">
    <location>
        <position position="74"/>
    </location>
    <ligand>
        <name>Na(+)</name>
        <dbReference type="ChEBI" id="CHEBI:29101"/>
        <note>structural</note>
    </ligand>
</feature>
<feature type="binding site" evidence="1">
    <location>
        <position position="77"/>
    </location>
    <ligand>
        <name>Na(+)</name>
        <dbReference type="ChEBI" id="CHEBI:29101"/>
        <note>structural</note>
    </ligand>
</feature>
<organism>
    <name type="scientific">Variovorax paradoxus (strain S110)</name>
    <dbReference type="NCBI Taxonomy" id="543728"/>
    <lineage>
        <taxon>Bacteria</taxon>
        <taxon>Pseudomonadati</taxon>
        <taxon>Pseudomonadota</taxon>
        <taxon>Betaproteobacteria</taxon>
        <taxon>Burkholderiales</taxon>
        <taxon>Comamonadaceae</taxon>
        <taxon>Variovorax</taxon>
    </lineage>
</organism>
<sequence length="125" mass="12825">MLLPILAICMGASVGALARWGLALWFGAGGFMPWGTLAANLVGGYLVGVAIASFHLLPDLDPAWRLALVTGFLGGLTTFSSFSAEVVTMLLEGRPGVALLTAAAHLGGSLFLTWLGIRSVQALAA</sequence>
<name>FLUC_VARPS</name>
<proteinExistence type="inferred from homology"/>
<accession>C5CTD2</accession>
<dbReference type="EMBL" id="CP001635">
    <property type="protein sequence ID" value="ACS18257.1"/>
    <property type="molecule type" value="Genomic_DNA"/>
</dbReference>
<dbReference type="SMR" id="C5CTD2"/>
<dbReference type="STRING" id="543728.Vapar_1606"/>
<dbReference type="KEGG" id="vap:Vapar_1606"/>
<dbReference type="eggNOG" id="COG0239">
    <property type="taxonomic scope" value="Bacteria"/>
</dbReference>
<dbReference type="HOGENOM" id="CLU_114342_3_3_4"/>
<dbReference type="OrthoDB" id="9806299at2"/>
<dbReference type="GO" id="GO:0005886">
    <property type="term" value="C:plasma membrane"/>
    <property type="evidence" value="ECO:0007669"/>
    <property type="project" value="UniProtKB-SubCell"/>
</dbReference>
<dbReference type="GO" id="GO:0062054">
    <property type="term" value="F:fluoride channel activity"/>
    <property type="evidence" value="ECO:0007669"/>
    <property type="project" value="UniProtKB-UniRule"/>
</dbReference>
<dbReference type="GO" id="GO:0046872">
    <property type="term" value="F:metal ion binding"/>
    <property type="evidence" value="ECO:0007669"/>
    <property type="project" value="UniProtKB-KW"/>
</dbReference>
<dbReference type="GO" id="GO:0140114">
    <property type="term" value="P:cellular detoxification of fluoride"/>
    <property type="evidence" value="ECO:0007669"/>
    <property type="project" value="UniProtKB-UniRule"/>
</dbReference>
<dbReference type="HAMAP" id="MF_00454">
    <property type="entry name" value="FluC"/>
    <property type="match status" value="1"/>
</dbReference>
<dbReference type="InterPro" id="IPR003691">
    <property type="entry name" value="FluC"/>
</dbReference>
<dbReference type="NCBIfam" id="TIGR00494">
    <property type="entry name" value="crcB"/>
    <property type="match status" value="1"/>
</dbReference>
<dbReference type="NCBIfam" id="NF010792">
    <property type="entry name" value="PRK14196.1"/>
    <property type="match status" value="1"/>
</dbReference>
<dbReference type="PANTHER" id="PTHR28259">
    <property type="entry name" value="FLUORIDE EXPORT PROTEIN 1-RELATED"/>
    <property type="match status" value="1"/>
</dbReference>
<dbReference type="PANTHER" id="PTHR28259:SF1">
    <property type="entry name" value="FLUORIDE EXPORT PROTEIN 1-RELATED"/>
    <property type="match status" value="1"/>
</dbReference>
<dbReference type="Pfam" id="PF02537">
    <property type="entry name" value="CRCB"/>
    <property type="match status" value="1"/>
</dbReference>
<gene>
    <name evidence="1" type="primary">fluC</name>
    <name evidence="1" type="synonym">crcB</name>
    <name type="ordered locus">Vapar_1606</name>
</gene>